<reference key="1">
    <citation type="journal article" date="2003" name="Genome Res.">
        <title>Genome sequence of an M3 strain of Streptococcus pyogenes reveals a large-scale genomic rearrangement in invasive strains and new insights into phage evolution.</title>
        <authorList>
            <person name="Nakagawa I."/>
            <person name="Kurokawa K."/>
            <person name="Yamashita A."/>
            <person name="Nakata M."/>
            <person name="Tomiyasu Y."/>
            <person name="Okahashi N."/>
            <person name="Kawabata S."/>
            <person name="Yamazaki K."/>
            <person name="Shiba T."/>
            <person name="Yasunaga T."/>
            <person name="Hayashi H."/>
            <person name="Hattori M."/>
            <person name="Hamada S."/>
        </authorList>
    </citation>
    <scope>NUCLEOTIDE SEQUENCE [LARGE SCALE GENOMIC DNA]</scope>
    <source>
        <strain>SSI-1</strain>
    </source>
</reference>
<feature type="chain" id="PRO_0000411519" description="Large ribosomal subunit protein uL6">
    <location>
        <begin position="1"/>
        <end position="178"/>
    </location>
</feature>
<protein>
    <recommendedName>
        <fullName evidence="1">Large ribosomal subunit protein uL6</fullName>
    </recommendedName>
    <alternativeName>
        <fullName evidence="2">50S ribosomal protein L6</fullName>
    </alternativeName>
</protein>
<accession>P0DE59</accession>
<accession>Q79YR3</accession>
<accession>Q7CFK7</accession>
<name>RL6_STRPQ</name>
<gene>
    <name evidence="1" type="primary">rplF</name>
    <name type="ordered locus">SPs0057</name>
</gene>
<sequence>MSRIGNKVITMPAGVELTNNNNVITVKGPKGELTREFNKNIEIKVEGTEITVVRPNDSKEMKTIHGTTRANLNNMVVGVSEGFKKDLEMKGVGYRAQLQGTKLVLSVGKSHQDEVEAPEGITFTVANPTSISVEGINKEVVGQTAAYIRSLRSPEPYKGKGIRYVGEYVRLKEGKTGK</sequence>
<proteinExistence type="inferred from homology"/>
<comment type="function">
    <text evidence="1">This protein binds to the 23S rRNA, and is important in its secondary structure. It is located near the subunit interface in the base of the L7/L12 stalk, and near the tRNA binding site of the peptidyltransferase center.</text>
</comment>
<comment type="subunit">
    <text evidence="1">Part of the 50S ribosomal subunit.</text>
</comment>
<comment type="similarity">
    <text evidence="1">Belongs to the universal ribosomal protein uL6 family.</text>
</comment>
<keyword id="KW-0687">Ribonucleoprotein</keyword>
<keyword id="KW-0689">Ribosomal protein</keyword>
<keyword id="KW-0694">RNA-binding</keyword>
<keyword id="KW-0699">rRNA-binding</keyword>
<evidence type="ECO:0000255" key="1">
    <source>
        <dbReference type="HAMAP-Rule" id="MF_01365"/>
    </source>
</evidence>
<evidence type="ECO:0000305" key="2"/>
<organism>
    <name type="scientific">Streptococcus pyogenes serotype M3 (strain SSI-1)</name>
    <dbReference type="NCBI Taxonomy" id="193567"/>
    <lineage>
        <taxon>Bacteria</taxon>
        <taxon>Bacillati</taxon>
        <taxon>Bacillota</taxon>
        <taxon>Bacilli</taxon>
        <taxon>Lactobacillales</taxon>
        <taxon>Streptococcaceae</taxon>
        <taxon>Streptococcus</taxon>
    </lineage>
</organism>
<dbReference type="EMBL" id="BA000034">
    <property type="protein sequence ID" value="BAC63152.1"/>
    <property type="molecule type" value="Genomic_DNA"/>
</dbReference>
<dbReference type="RefSeq" id="WP_002986629.1">
    <property type="nucleotide sequence ID" value="NC_004606.1"/>
</dbReference>
<dbReference type="SMR" id="P0DE59"/>
<dbReference type="GeneID" id="69900041"/>
<dbReference type="KEGG" id="sps:SPs0057"/>
<dbReference type="HOGENOM" id="CLU_065464_1_2_9"/>
<dbReference type="GO" id="GO:0022625">
    <property type="term" value="C:cytosolic large ribosomal subunit"/>
    <property type="evidence" value="ECO:0007669"/>
    <property type="project" value="TreeGrafter"/>
</dbReference>
<dbReference type="GO" id="GO:0019843">
    <property type="term" value="F:rRNA binding"/>
    <property type="evidence" value="ECO:0007669"/>
    <property type="project" value="UniProtKB-UniRule"/>
</dbReference>
<dbReference type="GO" id="GO:0003735">
    <property type="term" value="F:structural constituent of ribosome"/>
    <property type="evidence" value="ECO:0007669"/>
    <property type="project" value="InterPro"/>
</dbReference>
<dbReference type="GO" id="GO:0002181">
    <property type="term" value="P:cytoplasmic translation"/>
    <property type="evidence" value="ECO:0007669"/>
    <property type="project" value="TreeGrafter"/>
</dbReference>
<dbReference type="FunFam" id="3.90.930.12:FF:000001">
    <property type="entry name" value="50S ribosomal protein L6"/>
    <property type="match status" value="1"/>
</dbReference>
<dbReference type="FunFam" id="3.90.930.12:FF:000002">
    <property type="entry name" value="50S ribosomal protein L6"/>
    <property type="match status" value="1"/>
</dbReference>
<dbReference type="Gene3D" id="3.90.930.12">
    <property type="entry name" value="Ribosomal protein L6, alpha-beta domain"/>
    <property type="match status" value="2"/>
</dbReference>
<dbReference type="HAMAP" id="MF_01365_B">
    <property type="entry name" value="Ribosomal_uL6_B"/>
    <property type="match status" value="1"/>
</dbReference>
<dbReference type="InterPro" id="IPR000702">
    <property type="entry name" value="Ribosomal_uL6-like"/>
</dbReference>
<dbReference type="InterPro" id="IPR036789">
    <property type="entry name" value="Ribosomal_uL6-like_a/b-dom_sf"/>
</dbReference>
<dbReference type="InterPro" id="IPR020040">
    <property type="entry name" value="Ribosomal_uL6_a/b-dom"/>
</dbReference>
<dbReference type="InterPro" id="IPR019906">
    <property type="entry name" value="Ribosomal_uL6_bac-type"/>
</dbReference>
<dbReference type="InterPro" id="IPR002358">
    <property type="entry name" value="Ribosomal_uL6_CS"/>
</dbReference>
<dbReference type="NCBIfam" id="TIGR03654">
    <property type="entry name" value="L6_bact"/>
    <property type="match status" value="1"/>
</dbReference>
<dbReference type="PANTHER" id="PTHR11655">
    <property type="entry name" value="60S/50S RIBOSOMAL PROTEIN L6/L9"/>
    <property type="match status" value="1"/>
</dbReference>
<dbReference type="PANTHER" id="PTHR11655:SF14">
    <property type="entry name" value="LARGE RIBOSOMAL SUBUNIT PROTEIN UL6M"/>
    <property type="match status" value="1"/>
</dbReference>
<dbReference type="Pfam" id="PF00347">
    <property type="entry name" value="Ribosomal_L6"/>
    <property type="match status" value="2"/>
</dbReference>
<dbReference type="PIRSF" id="PIRSF002162">
    <property type="entry name" value="Ribosomal_L6"/>
    <property type="match status" value="1"/>
</dbReference>
<dbReference type="PRINTS" id="PR00059">
    <property type="entry name" value="RIBOSOMALL6"/>
</dbReference>
<dbReference type="SUPFAM" id="SSF56053">
    <property type="entry name" value="Ribosomal protein L6"/>
    <property type="match status" value="2"/>
</dbReference>
<dbReference type="PROSITE" id="PS00525">
    <property type="entry name" value="RIBOSOMAL_L6_1"/>
    <property type="match status" value="1"/>
</dbReference>